<proteinExistence type="evidence at protein level"/>
<name>RECA_PSEAE</name>
<accession>P08280</accession>
<evidence type="ECO:0000255" key="1">
    <source>
        <dbReference type="HAMAP-Rule" id="MF_00268"/>
    </source>
</evidence>
<evidence type="ECO:0000305" key="2"/>
<protein>
    <recommendedName>
        <fullName evidence="1">Protein RecA</fullName>
    </recommendedName>
    <alternativeName>
        <fullName evidence="1">Recombinase A</fullName>
    </alternativeName>
</protein>
<reference key="1">
    <citation type="journal article" date="1987" name="Mol. Gen. Genet.">
        <title>The sequence and function of the recA gene and its protein in Pseudomonas aeruginosa PAO.</title>
        <authorList>
            <person name="Sano Y."/>
            <person name="Kageyama M."/>
        </authorList>
    </citation>
    <scope>NUCLEOTIDE SEQUENCE [GENOMIC DNA]</scope>
    <source>
        <strain>PAO</strain>
    </source>
</reference>
<reference key="2">
    <citation type="submission" date="1990-03" db="EMBL/GenBank/DDBJ databases">
        <authorList>
            <person name="Zaitsev E.N."/>
            <person name="Krjukov V.M."/>
            <person name="Kuzmin N.P."/>
            <person name="Alekseev A.A."/>
            <person name="Lanzov V.A."/>
        </authorList>
    </citation>
    <scope>NUCLEOTIDE SEQUENCE [GENOMIC DNA]</scope>
    <source>
        <strain>PAM 7</strain>
    </source>
</reference>
<reference key="3">
    <citation type="journal article" date="1990" name="Bioorg. Khim.">
        <title>Structure of the Pseudomonas aeruginosa recA gene.</title>
        <authorList>
            <person name="Kryukov V.M."/>
            <person name="Zaitsev E.N."/>
            <person name="Kouzmin N.P."/>
            <person name="Bayev A.A."/>
        </authorList>
    </citation>
    <scope>NUCLEOTIDE SEQUENCE [GENOMIC DNA]</scope>
</reference>
<reference key="4">
    <citation type="journal article" date="1993" name="J. Bacteriol.">
        <title>Role of the recA-related gene adjacent to the recA gene in Pseudomonas aeruginosa.</title>
        <authorList>
            <person name="Sano Y."/>
        </authorList>
    </citation>
    <scope>NUCLEOTIDE SEQUENCE [GENOMIC DNA]</scope>
    <source>
        <strain>PAO</strain>
    </source>
</reference>
<reference key="5">
    <citation type="journal article" date="2000" name="Nature">
        <title>Complete genome sequence of Pseudomonas aeruginosa PAO1, an opportunistic pathogen.</title>
        <authorList>
            <person name="Stover C.K."/>
            <person name="Pham X.-Q.T."/>
            <person name="Erwin A.L."/>
            <person name="Mizoguchi S.D."/>
            <person name="Warrener P."/>
            <person name="Hickey M.J."/>
            <person name="Brinkman F.S.L."/>
            <person name="Hufnagle W.O."/>
            <person name="Kowalik D.J."/>
            <person name="Lagrou M."/>
            <person name="Garber R.L."/>
            <person name="Goltry L."/>
            <person name="Tolentino E."/>
            <person name="Westbrock-Wadman S."/>
            <person name="Yuan Y."/>
            <person name="Brody L.L."/>
            <person name="Coulter S.N."/>
            <person name="Folger K.R."/>
            <person name="Kas A."/>
            <person name="Larbig K."/>
            <person name="Lim R.M."/>
            <person name="Smith K.A."/>
            <person name="Spencer D.H."/>
            <person name="Wong G.K.-S."/>
            <person name="Wu Z."/>
            <person name="Paulsen I.T."/>
            <person name="Reizer J."/>
            <person name="Saier M.H. Jr."/>
            <person name="Hancock R.E.W."/>
            <person name="Lory S."/>
            <person name="Olson M.V."/>
        </authorList>
    </citation>
    <scope>NUCLEOTIDE SEQUENCE [LARGE SCALE GENOMIC DNA]</scope>
    <source>
        <strain>ATCC 15692 / DSM 22644 / CIP 104116 / JCM 14847 / LMG 12228 / 1C / PRS 101 / PAO1</strain>
    </source>
</reference>
<comment type="function">
    <text>Can catalyze the hydrolysis of ATP in the presence of single-stranded DNA, the ATP-dependent uptake of single-stranded DNA by duplex DNA, and the ATP-dependent hybridization of homologous single-stranded DNAs. It interacts with LexA causing its activation and leading to its autocatalytic cleavage.</text>
</comment>
<comment type="subcellular location">
    <subcellularLocation>
        <location evidence="1">Cytoplasm</location>
    </subcellularLocation>
</comment>
<comment type="similarity">
    <text evidence="1">Belongs to the RecA family.</text>
</comment>
<sequence length="346" mass="36879">MDENKKRALAAALGQIERQFGKGAVMRMGDHERQAIPAISTGSLGLDIALGIGGLPKGRIVEIYGPESSGKTTLTLSVIAEAQKQGATCAFVDAEHALDPDYAGKLGVNVDDLLVSQPDTGEQALEITDMLVRSNAVDVIIVDSVAALVPKAEIEGEMGDAHVGLQARLMSQALRKITGNIKNANCLVIFINQIRMKIGVMFGNPETTTGGNALKFYASVRLDIRRTGAVKEGDEVVGSETRVKVVKNKVSPPFRQAEFQILYGKGIYRTGEIIDLGVQLGLVEKSGAWYSYQGSKIGQGKANAAKYLEDNPEIGSVLEKTIRDQLLAKSGPVKADAEEVADAEAD</sequence>
<keyword id="KW-0002">3D-structure</keyword>
<keyword id="KW-0067">ATP-binding</keyword>
<keyword id="KW-0963">Cytoplasm</keyword>
<keyword id="KW-0227">DNA damage</keyword>
<keyword id="KW-0233">DNA recombination</keyword>
<keyword id="KW-0234">DNA repair</keyword>
<keyword id="KW-0238">DNA-binding</keyword>
<keyword id="KW-0547">Nucleotide-binding</keyword>
<keyword id="KW-1185">Reference proteome</keyword>
<keyword id="KW-0742">SOS response</keyword>
<feature type="chain" id="PRO_0000122801" description="Protein RecA">
    <location>
        <begin position="1"/>
        <end position="346"/>
    </location>
</feature>
<feature type="binding site" evidence="1">
    <location>
        <begin position="65"/>
        <end position="72"/>
    </location>
    <ligand>
        <name>ATP</name>
        <dbReference type="ChEBI" id="CHEBI:30616"/>
    </ligand>
</feature>
<feature type="sequence conflict" description="In Ref. 3." evidence="2" ref="3">
    <original>V</original>
    <variation>L</variation>
    <location>
        <position position="333"/>
    </location>
</feature>
<organism>
    <name type="scientific">Pseudomonas aeruginosa (strain ATCC 15692 / DSM 22644 / CIP 104116 / JCM 14847 / LMG 12228 / 1C / PRS 101 / PAO1)</name>
    <dbReference type="NCBI Taxonomy" id="208964"/>
    <lineage>
        <taxon>Bacteria</taxon>
        <taxon>Pseudomonadati</taxon>
        <taxon>Pseudomonadota</taxon>
        <taxon>Gammaproteobacteria</taxon>
        <taxon>Pseudomonadales</taxon>
        <taxon>Pseudomonadaceae</taxon>
        <taxon>Pseudomonas</taxon>
    </lineage>
</organism>
<dbReference type="EMBL" id="X05691">
    <property type="protein sequence ID" value="CAA29173.1"/>
    <property type="molecule type" value="Genomic_DNA"/>
</dbReference>
<dbReference type="EMBL" id="X52261">
    <property type="protein sequence ID" value="CAA36504.1"/>
    <property type="molecule type" value="Genomic_DNA"/>
</dbReference>
<dbReference type="EMBL" id="D13090">
    <property type="status" value="NOT_ANNOTATED_CDS"/>
    <property type="molecule type" value="Genomic_DNA"/>
</dbReference>
<dbReference type="EMBL" id="AE004091">
    <property type="protein sequence ID" value="AAG07005.1"/>
    <property type="molecule type" value="Genomic_DNA"/>
</dbReference>
<dbReference type="PIR" id="S06265">
    <property type="entry name" value="RQPSAA"/>
</dbReference>
<dbReference type="RefSeq" id="NP_252307.1">
    <property type="nucleotide sequence ID" value="NC_002516.2"/>
</dbReference>
<dbReference type="RefSeq" id="WP_003092260.1">
    <property type="nucleotide sequence ID" value="NZ_QZGE01000001.1"/>
</dbReference>
<dbReference type="PDB" id="8S70">
    <property type="method" value="EM"/>
    <property type="resolution" value="4.20 A"/>
    <property type="chains" value="D=2-328"/>
</dbReference>
<dbReference type="PDB" id="8S7G">
    <property type="method" value="EM"/>
    <property type="resolution" value="3.43 A"/>
    <property type="chains" value="C/D/E/F/G/H/I/J/K/L/M=2-346"/>
</dbReference>
<dbReference type="PDBsum" id="8S70"/>
<dbReference type="PDBsum" id="8S7G"/>
<dbReference type="EMDB" id="EMD-19761"/>
<dbReference type="EMDB" id="EMD-19771"/>
<dbReference type="SMR" id="P08280"/>
<dbReference type="FunCoup" id="P08280">
    <property type="interactions" value="636"/>
</dbReference>
<dbReference type="STRING" id="208964.PA3617"/>
<dbReference type="PaxDb" id="208964-PA3617"/>
<dbReference type="DNASU" id="880173"/>
<dbReference type="GeneID" id="77219902"/>
<dbReference type="GeneID" id="880173"/>
<dbReference type="KEGG" id="pae:PA3617"/>
<dbReference type="PATRIC" id="fig|208964.12.peg.3785"/>
<dbReference type="PseudoCAP" id="PA3617"/>
<dbReference type="HOGENOM" id="CLU_040469_3_2_6"/>
<dbReference type="InParanoid" id="P08280"/>
<dbReference type="OrthoDB" id="9776733at2"/>
<dbReference type="PhylomeDB" id="P08280"/>
<dbReference type="BioCyc" id="PAER208964:G1FZ6-3686-MONOMER"/>
<dbReference type="Proteomes" id="UP000002438">
    <property type="component" value="Chromosome"/>
</dbReference>
<dbReference type="GO" id="GO:0005737">
    <property type="term" value="C:cytoplasm"/>
    <property type="evidence" value="ECO:0007669"/>
    <property type="project" value="UniProtKB-SubCell"/>
</dbReference>
<dbReference type="GO" id="GO:0005524">
    <property type="term" value="F:ATP binding"/>
    <property type="evidence" value="ECO:0007669"/>
    <property type="project" value="UniProtKB-UniRule"/>
</dbReference>
<dbReference type="GO" id="GO:0016887">
    <property type="term" value="F:ATP hydrolysis activity"/>
    <property type="evidence" value="ECO:0007669"/>
    <property type="project" value="InterPro"/>
</dbReference>
<dbReference type="GO" id="GO:0140664">
    <property type="term" value="F:ATP-dependent DNA damage sensor activity"/>
    <property type="evidence" value="ECO:0007669"/>
    <property type="project" value="InterPro"/>
</dbReference>
<dbReference type="GO" id="GO:0003684">
    <property type="term" value="F:damaged DNA binding"/>
    <property type="evidence" value="ECO:0007669"/>
    <property type="project" value="UniProtKB-UniRule"/>
</dbReference>
<dbReference type="GO" id="GO:0003697">
    <property type="term" value="F:single-stranded DNA binding"/>
    <property type="evidence" value="ECO:0007669"/>
    <property type="project" value="UniProtKB-UniRule"/>
</dbReference>
<dbReference type="GO" id="GO:0006310">
    <property type="term" value="P:DNA recombination"/>
    <property type="evidence" value="ECO:0007669"/>
    <property type="project" value="UniProtKB-UniRule"/>
</dbReference>
<dbReference type="GO" id="GO:0006281">
    <property type="term" value="P:DNA repair"/>
    <property type="evidence" value="ECO:0007669"/>
    <property type="project" value="UniProtKB-UniRule"/>
</dbReference>
<dbReference type="GO" id="GO:0009432">
    <property type="term" value="P:SOS response"/>
    <property type="evidence" value="ECO:0007669"/>
    <property type="project" value="UniProtKB-UniRule"/>
</dbReference>
<dbReference type="CDD" id="cd00983">
    <property type="entry name" value="RecA"/>
    <property type="match status" value="1"/>
</dbReference>
<dbReference type="FunFam" id="3.40.50.300:FF:000087">
    <property type="entry name" value="Recombinase RecA"/>
    <property type="match status" value="1"/>
</dbReference>
<dbReference type="Gene3D" id="3.40.50.300">
    <property type="entry name" value="P-loop containing nucleotide triphosphate hydrolases"/>
    <property type="match status" value="1"/>
</dbReference>
<dbReference type="HAMAP" id="MF_00268">
    <property type="entry name" value="RecA"/>
    <property type="match status" value="1"/>
</dbReference>
<dbReference type="InterPro" id="IPR003593">
    <property type="entry name" value="AAA+_ATPase"/>
</dbReference>
<dbReference type="InterPro" id="IPR013765">
    <property type="entry name" value="DNA_recomb/repair_RecA"/>
</dbReference>
<dbReference type="InterPro" id="IPR020584">
    <property type="entry name" value="DNA_recomb/repair_RecA_CS"/>
</dbReference>
<dbReference type="InterPro" id="IPR027417">
    <property type="entry name" value="P-loop_NTPase"/>
</dbReference>
<dbReference type="InterPro" id="IPR049261">
    <property type="entry name" value="RecA-like_C"/>
</dbReference>
<dbReference type="InterPro" id="IPR049428">
    <property type="entry name" value="RecA-like_N"/>
</dbReference>
<dbReference type="InterPro" id="IPR020588">
    <property type="entry name" value="RecA_ATP-bd"/>
</dbReference>
<dbReference type="InterPro" id="IPR023400">
    <property type="entry name" value="RecA_C_sf"/>
</dbReference>
<dbReference type="InterPro" id="IPR020587">
    <property type="entry name" value="RecA_monomer-monomer_interface"/>
</dbReference>
<dbReference type="NCBIfam" id="TIGR02012">
    <property type="entry name" value="tigrfam_recA"/>
    <property type="match status" value="1"/>
</dbReference>
<dbReference type="PANTHER" id="PTHR45900:SF1">
    <property type="entry name" value="MITOCHONDRIAL DNA REPAIR PROTEIN RECA HOMOLOG-RELATED"/>
    <property type="match status" value="1"/>
</dbReference>
<dbReference type="PANTHER" id="PTHR45900">
    <property type="entry name" value="RECA"/>
    <property type="match status" value="1"/>
</dbReference>
<dbReference type="Pfam" id="PF00154">
    <property type="entry name" value="RecA"/>
    <property type="match status" value="1"/>
</dbReference>
<dbReference type="Pfam" id="PF21096">
    <property type="entry name" value="RecA_C"/>
    <property type="match status" value="1"/>
</dbReference>
<dbReference type="PRINTS" id="PR00142">
    <property type="entry name" value="RECA"/>
</dbReference>
<dbReference type="SMART" id="SM00382">
    <property type="entry name" value="AAA"/>
    <property type="match status" value="1"/>
</dbReference>
<dbReference type="SUPFAM" id="SSF52540">
    <property type="entry name" value="P-loop containing nucleoside triphosphate hydrolases"/>
    <property type="match status" value="1"/>
</dbReference>
<dbReference type="SUPFAM" id="SSF54752">
    <property type="entry name" value="RecA protein, C-terminal domain"/>
    <property type="match status" value="1"/>
</dbReference>
<dbReference type="PROSITE" id="PS00321">
    <property type="entry name" value="RECA_1"/>
    <property type="match status" value="1"/>
</dbReference>
<dbReference type="PROSITE" id="PS50162">
    <property type="entry name" value="RECA_2"/>
    <property type="match status" value="1"/>
</dbReference>
<dbReference type="PROSITE" id="PS50163">
    <property type="entry name" value="RECA_3"/>
    <property type="match status" value="1"/>
</dbReference>
<gene>
    <name evidence="1" type="primary">recA</name>
    <name type="ordered locus">PA3617</name>
</gene>